<evidence type="ECO:0000250" key="1">
    <source>
        <dbReference type="UniProtKB" id="P22256"/>
    </source>
</evidence>
<evidence type="ECO:0000269" key="2">
    <source>
    </source>
</evidence>
<evidence type="ECO:0000303" key="3">
    <source>
    </source>
</evidence>
<evidence type="ECO:0000305" key="4"/>
<evidence type="ECO:0000312" key="5">
    <source>
        <dbReference type="EMBL" id="AAN69692.1"/>
    </source>
</evidence>
<name>2AAAT_PSEPK</name>
<gene>
    <name evidence="5" type="ordered locus">PP_4108</name>
</gene>
<accession>Q88FI7</accession>
<feature type="chain" id="PRO_0000457780" description="2-aminoadipate transaminase">
    <location>
        <begin position="1"/>
        <end position="416"/>
    </location>
</feature>
<feature type="binding site" evidence="1">
    <location>
        <begin position="102"/>
        <end position="103"/>
    </location>
    <ligand>
        <name>pyridoxal 5'-phosphate</name>
        <dbReference type="ChEBI" id="CHEBI:597326"/>
    </ligand>
</feature>
<feature type="binding site" evidence="1">
    <location>
        <position position="233"/>
    </location>
    <ligand>
        <name>pyridoxal 5'-phosphate</name>
        <dbReference type="ChEBI" id="CHEBI:597326"/>
    </ligand>
</feature>
<feature type="binding site" evidence="1">
    <location>
        <position position="288"/>
    </location>
    <ligand>
        <name>pyridoxal 5'-phosphate</name>
        <dbReference type="ChEBI" id="CHEBI:597326"/>
    </ligand>
</feature>
<feature type="modified residue" description="N6-(pyridoxal phosphate)lysine" evidence="1">
    <location>
        <position position="259"/>
    </location>
</feature>
<reference key="1">
    <citation type="journal article" date="2002" name="Environ. Microbiol.">
        <title>Complete genome sequence and comparative analysis of the metabolically versatile Pseudomonas putida KT2440.</title>
        <authorList>
            <person name="Nelson K.E."/>
            <person name="Weinel C."/>
            <person name="Paulsen I.T."/>
            <person name="Dodson R.J."/>
            <person name="Hilbert H."/>
            <person name="Martins dos Santos V.A.P."/>
            <person name="Fouts D.E."/>
            <person name="Gill S.R."/>
            <person name="Pop M."/>
            <person name="Holmes M."/>
            <person name="Brinkac L.M."/>
            <person name="Beanan M.J."/>
            <person name="DeBoy R.T."/>
            <person name="Daugherty S.C."/>
            <person name="Kolonay J.F."/>
            <person name="Madupu R."/>
            <person name="Nelson W.C."/>
            <person name="White O."/>
            <person name="Peterson J.D."/>
            <person name="Khouri H.M."/>
            <person name="Hance I."/>
            <person name="Chris Lee P."/>
            <person name="Holtzapple E.K."/>
            <person name="Scanlan D."/>
            <person name="Tran K."/>
            <person name="Moazzez A."/>
            <person name="Utterback T.R."/>
            <person name="Rizzo M."/>
            <person name="Lee K."/>
            <person name="Kosack D."/>
            <person name="Moestl D."/>
            <person name="Wedler H."/>
            <person name="Lauber J."/>
            <person name="Stjepandic D."/>
            <person name="Hoheisel J."/>
            <person name="Straetz M."/>
            <person name="Heim S."/>
            <person name="Kiewitz C."/>
            <person name="Eisen J.A."/>
            <person name="Timmis K.N."/>
            <person name="Duesterhoeft A."/>
            <person name="Tuemmler B."/>
            <person name="Fraser C.M."/>
        </authorList>
    </citation>
    <scope>NUCLEOTIDE SEQUENCE [LARGE SCALE GENOMIC DNA]</scope>
    <source>
        <strain>ATCC 47054 / DSM 6125 / CFBP 8728 / NCIMB 11950 / KT2440</strain>
    </source>
</reference>
<reference key="2">
    <citation type="journal article" date="2019" name="MBio">
        <title>Massively parallel fitness profiling reveals multiple novel enzymes in Pseudomonas putida lysine metabolism.</title>
        <authorList>
            <person name="Thompson M.G."/>
            <person name="Blake-Hedges J.M."/>
            <person name="Cruz-Morales P."/>
            <person name="Barajas J.F."/>
            <person name="Curran S.C."/>
            <person name="Eiben C.B."/>
            <person name="Harris N.C."/>
            <person name="Benites V.T."/>
            <person name="Gin J.W."/>
            <person name="Sharpless W.A."/>
            <person name="Twigg F.F."/>
            <person name="Skyrud W."/>
            <person name="Krishna R.N."/>
            <person name="Pereira J.H."/>
            <person name="Baidoo E.E.K."/>
            <person name="Petzold C.J."/>
            <person name="Adams P.D."/>
            <person name="Arkin A.P."/>
            <person name="Deutschbauer A.M."/>
            <person name="Keasling J.D."/>
        </authorList>
    </citation>
    <scope>FUNCTION</scope>
    <scope>CATALYTIC ACTIVITY</scope>
    <scope>COFACTOR</scope>
    <scope>PATHWAY</scope>
    <scope>INDUCTION</scope>
    <scope>DISRUPTION PHENOTYPE</scope>
    <source>
        <strain>ATCC 47054 / DSM 6125 / CFBP 8728 / NCIMB 11950 / KT2440</strain>
    </source>
</reference>
<comment type="function">
    <text evidence="2">Catalyzes the conversion of 2-aminoadipate (2AA) to 2-oxoadipate (2OA) (PubMed:31064836). Is most active on L-2-aminoadipate (L-2AA) and shows only weak activity on the enantiomer, D-2-aminoadipate (D-2AA) (PubMed:31064836). Shows moderate activity on 5-aminovalerate (5AVA) and weak activity toward 4-aminobutyrate (GABA) (PubMed:31064836). Is involved in a D-lysine catabolic pathway (PubMed:31064836).</text>
</comment>
<comment type="catalytic activity">
    <reaction evidence="2">
        <text>L-2-aminoadipate + 2-oxoglutarate = 2-oxoadipate + L-glutamate</text>
        <dbReference type="Rhea" id="RHEA:12601"/>
        <dbReference type="ChEBI" id="CHEBI:16810"/>
        <dbReference type="ChEBI" id="CHEBI:29985"/>
        <dbReference type="ChEBI" id="CHEBI:57499"/>
        <dbReference type="ChEBI" id="CHEBI:58672"/>
        <dbReference type="EC" id="2.6.1.39"/>
    </reaction>
    <physiologicalReaction direction="left-to-right" evidence="2">
        <dbReference type="Rhea" id="RHEA:12602"/>
    </physiologicalReaction>
</comment>
<comment type="catalytic activity">
    <reaction evidence="2">
        <text>5-aminopentanoate + 2-oxoglutarate = 5-oxopentanoate + L-glutamate</text>
        <dbReference type="Rhea" id="RHEA:10212"/>
        <dbReference type="ChEBI" id="CHEBI:16120"/>
        <dbReference type="ChEBI" id="CHEBI:16810"/>
        <dbReference type="ChEBI" id="CHEBI:29985"/>
        <dbReference type="ChEBI" id="CHEBI:356010"/>
    </reaction>
</comment>
<comment type="cofactor">
    <cofactor evidence="2">
        <name>pyridoxal 5'-phosphate</name>
        <dbReference type="ChEBI" id="CHEBI:597326"/>
    </cofactor>
</comment>
<comment type="pathway">
    <text evidence="2">Amino-acid degradation.</text>
</comment>
<comment type="induction">
    <text evidence="2">Up-regulated when grown on L-lysine, D-lysine or 2-aminoadipate.</text>
</comment>
<comment type="disruption phenotype">
    <text evidence="2">Inactivation of the gene leads to a significant growth defect on D-lysine and a relatively minor growth defect on L-lysine (PubMed:31064836). Deletion mutant shows an increased concentration of intracellular 2-aminoadipate (PubMed:31064836).</text>
</comment>
<comment type="similarity">
    <text evidence="4">Belongs to the class-III pyridoxal-phosphate-dependent aminotransferase family.</text>
</comment>
<sequence>MNQESISQSIAIVHPITLSHGRNAEVWDTDGKRYIDFVGGIGVLNLGHCNPAVVEAIQAQATRLTHYAFNAAPHGPYLALMEQLSQFVPVSYPLAGMLTNSGAEAAENALKVARGATGKRAIIAFDGGFHGRTLATLNLNGKVAPYKQRVGELPGPVYHLPYPSADTGVTCEQALKAMDRLFSVELAVEDVAAFIFEPVQGEGGFLALDPAFAQALRRFCDERGILIIIDEIQSGFGRTGQRFAFPRLGIEPDLLLLAKSIAGGMPLGAVVGRKELMAALPKGGLGGTYSGNPISCAAALASLAQMTDENLATWGERQEQAIVSRYERWKASGLSPYIGRLTGVGAMRGIEFANADGSPAPAQLAKVMEAARARGLLLMPSGKARHIIRLLAPLTIEAEVLEEGLDILEQCLAELN</sequence>
<dbReference type="EC" id="2.6.1.39" evidence="2"/>
<dbReference type="EMBL" id="AE015451">
    <property type="protein sequence ID" value="AAN69692.1"/>
    <property type="molecule type" value="Genomic_DNA"/>
</dbReference>
<dbReference type="RefSeq" id="NP_746228.1">
    <property type="nucleotide sequence ID" value="NC_002947.4"/>
</dbReference>
<dbReference type="RefSeq" id="WP_010954890.1">
    <property type="nucleotide sequence ID" value="NZ_CP169744.1"/>
</dbReference>
<dbReference type="SMR" id="Q88FI7"/>
<dbReference type="STRING" id="160488.PP_4108"/>
<dbReference type="PaxDb" id="160488-PP_4108"/>
<dbReference type="KEGG" id="ppu:PP_4108"/>
<dbReference type="PATRIC" id="fig|160488.4.peg.4366"/>
<dbReference type="eggNOG" id="COG0160">
    <property type="taxonomic scope" value="Bacteria"/>
</dbReference>
<dbReference type="HOGENOM" id="CLU_016922_10_0_6"/>
<dbReference type="OrthoDB" id="9801052at2"/>
<dbReference type="PhylomeDB" id="Q88FI7"/>
<dbReference type="BioCyc" id="MetaCyc:G1G01-4375-MONOMER"/>
<dbReference type="BioCyc" id="PPUT160488:G1G01-4375-MONOMER"/>
<dbReference type="Proteomes" id="UP000000556">
    <property type="component" value="Chromosome"/>
</dbReference>
<dbReference type="GO" id="GO:0042802">
    <property type="term" value="F:identical protein binding"/>
    <property type="evidence" value="ECO:0007669"/>
    <property type="project" value="TreeGrafter"/>
</dbReference>
<dbReference type="GO" id="GO:0030170">
    <property type="term" value="F:pyridoxal phosphate binding"/>
    <property type="evidence" value="ECO:0007669"/>
    <property type="project" value="InterPro"/>
</dbReference>
<dbReference type="GO" id="GO:0008483">
    <property type="term" value="F:transaminase activity"/>
    <property type="evidence" value="ECO:0007669"/>
    <property type="project" value="UniProtKB-KW"/>
</dbReference>
<dbReference type="CDD" id="cd00610">
    <property type="entry name" value="OAT_like"/>
    <property type="match status" value="1"/>
</dbReference>
<dbReference type="FunFam" id="3.40.640.10:FF:000013">
    <property type="entry name" value="4-aminobutyrate aminotransferase"/>
    <property type="match status" value="1"/>
</dbReference>
<dbReference type="Gene3D" id="3.90.1150.10">
    <property type="entry name" value="Aspartate Aminotransferase, domain 1"/>
    <property type="match status" value="1"/>
</dbReference>
<dbReference type="Gene3D" id="3.40.640.10">
    <property type="entry name" value="Type I PLP-dependent aspartate aminotransferase-like (Major domain)"/>
    <property type="match status" value="1"/>
</dbReference>
<dbReference type="InterPro" id="IPR005814">
    <property type="entry name" value="Aminotrans_3"/>
</dbReference>
<dbReference type="InterPro" id="IPR049704">
    <property type="entry name" value="Aminotrans_3_PPA_site"/>
</dbReference>
<dbReference type="InterPro" id="IPR050103">
    <property type="entry name" value="Class-III_PLP-dep_AT"/>
</dbReference>
<dbReference type="InterPro" id="IPR015424">
    <property type="entry name" value="PyrdxlP-dep_Trfase"/>
</dbReference>
<dbReference type="InterPro" id="IPR015421">
    <property type="entry name" value="PyrdxlP-dep_Trfase_major"/>
</dbReference>
<dbReference type="InterPro" id="IPR015422">
    <property type="entry name" value="PyrdxlP-dep_Trfase_small"/>
</dbReference>
<dbReference type="PANTHER" id="PTHR11986">
    <property type="entry name" value="AMINOTRANSFERASE CLASS III"/>
    <property type="match status" value="1"/>
</dbReference>
<dbReference type="PANTHER" id="PTHR11986:SF58">
    <property type="entry name" value="LEUCINE_METHIONINE RACEMASE"/>
    <property type="match status" value="1"/>
</dbReference>
<dbReference type="Pfam" id="PF00202">
    <property type="entry name" value="Aminotran_3"/>
    <property type="match status" value="1"/>
</dbReference>
<dbReference type="PIRSF" id="PIRSF000521">
    <property type="entry name" value="Transaminase_4ab_Lys_Orn"/>
    <property type="match status" value="1"/>
</dbReference>
<dbReference type="SUPFAM" id="SSF53383">
    <property type="entry name" value="PLP-dependent transferases"/>
    <property type="match status" value="1"/>
</dbReference>
<dbReference type="PROSITE" id="PS00600">
    <property type="entry name" value="AA_TRANSFER_CLASS_3"/>
    <property type="match status" value="1"/>
</dbReference>
<organism>
    <name type="scientific">Pseudomonas putida (strain ATCC 47054 / DSM 6125 / CFBP 8728 / NCIMB 11950 / KT2440)</name>
    <dbReference type="NCBI Taxonomy" id="160488"/>
    <lineage>
        <taxon>Bacteria</taxon>
        <taxon>Pseudomonadati</taxon>
        <taxon>Pseudomonadota</taxon>
        <taxon>Gammaproteobacteria</taxon>
        <taxon>Pseudomonadales</taxon>
        <taxon>Pseudomonadaceae</taxon>
        <taxon>Pseudomonas</taxon>
    </lineage>
</organism>
<proteinExistence type="evidence at protein level"/>
<protein>
    <recommendedName>
        <fullName evidence="4">2-aminoadipate transaminase</fullName>
        <ecNumber evidence="2">2.6.1.39</ecNumber>
    </recommendedName>
    <alternativeName>
        <fullName evidence="4">2-aminoadipate aminotransferase</fullName>
    </alternativeName>
    <alternativeName>
        <fullName evidence="3">L-2AA aminotransferase</fullName>
    </alternativeName>
</protein>
<keyword id="KW-0032">Aminotransferase</keyword>
<keyword id="KW-0663">Pyridoxal phosphate</keyword>
<keyword id="KW-1185">Reference proteome</keyword>
<keyword id="KW-0808">Transferase</keyword>